<feature type="chain" id="PRO_0000159311" description="Uncharacterized protein MJ0749">
    <location>
        <begin position="1"/>
        <end position="246"/>
    </location>
</feature>
<feature type="transmembrane region" description="Helical" evidence="2">
    <location>
        <begin position="32"/>
        <end position="52"/>
    </location>
</feature>
<feature type="transmembrane region" description="Helical" evidence="2">
    <location>
        <begin position="69"/>
        <end position="89"/>
    </location>
</feature>
<feature type="transmembrane region" description="Helical" evidence="2">
    <location>
        <begin position="121"/>
        <end position="141"/>
    </location>
</feature>
<feature type="transmembrane region" description="Helical" evidence="2">
    <location>
        <begin position="146"/>
        <end position="166"/>
    </location>
</feature>
<feature type="domain" description="4Fe-4S ferredoxin-type 1" evidence="3">
    <location>
        <begin position="185"/>
        <end position="213"/>
    </location>
</feature>
<feature type="domain" description="4Fe-4S ferredoxin-type 2" evidence="3">
    <location>
        <begin position="210"/>
        <end position="239"/>
    </location>
</feature>
<feature type="binding site" evidence="1">
    <location>
        <position position="194"/>
    </location>
    <ligand>
        <name>[4Fe-4S] cluster</name>
        <dbReference type="ChEBI" id="CHEBI:49883"/>
        <label>1</label>
    </ligand>
</feature>
<feature type="binding site" evidence="1">
    <location>
        <position position="197"/>
    </location>
    <ligand>
        <name>[4Fe-4S] cluster</name>
        <dbReference type="ChEBI" id="CHEBI:49883"/>
        <label>1</label>
    </ligand>
</feature>
<feature type="binding site" evidence="1">
    <location>
        <position position="200"/>
    </location>
    <ligand>
        <name>[4Fe-4S] cluster</name>
        <dbReference type="ChEBI" id="CHEBI:49883"/>
        <label>1</label>
    </ligand>
</feature>
<feature type="binding site" evidence="1">
    <location>
        <position position="204"/>
    </location>
    <ligand>
        <name>[4Fe-4S] cluster</name>
        <dbReference type="ChEBI" id="CHEBI:49883"/>
        <label>2</label>
    </ligand>
</feature>
<feature type="binding site" evidence="1">
    <location>
        <position position="219"/>
    </location>
    <ligand>
        <name>[4Fe-4S] cluster</name>
        <dbReference type="ChEBI" id="CHEBI:49883"/>
        <label>2</label>
    </ligand>
</feature>
<feature type="binding site" evidence="1">
    <location>
        <position position="222"/>
    </location>
    <ligand>
        <name>[4Fe-4S] cluster</name>
        <dbReference type="ChEBI" id="CHEBI:49883"/>
        <label>2</label>
    </ligand>
</feature>
<feature type="binding site" evidence="1">
    <location>
        <position position="225"/>
    </location>
    <ligand>
        <name>[4Fe-4S] cluster</name>
        <dbReference type="ChEBI" id="CHEBI:49883"/>
        <label>2</label>
    </ligand>
</feature>
<feature type="binding site" evidence="1">
    <location>
        <position position="229"/>
    </location>
    <ligand>
        <name>[4Fe-4S] cluster</name>
        <dbReference type="ChEBI" id="CHEBI:49883"/>
        <label>1</label>
    </ligand>
</feature>
<evidence type="ECO:0000250" key="1"/>
<evidence type="ECO:0000255" key="2"/>
<evidence type="ECO:0000255" key="3">
    <source>
        <dbReference type="PROSITE-ProRule" id="PRU00711"/>
    </source>
</evidence>
<evidence type="ECO:0000305" key="4"/>
<protein>
    <recommendedName>
        <fullName>Uncharacterized protein MJ0749</fullName>
    </recommendedName>
</protein>
<proteinExistence type="predicted"/>
<keyword id="KW-0004">4Fe-4S</keyword>
<keyword id="KW-1003">Cell membrane</keyword>
<keyword id="KW-0249">Electron transport</keyword>
<keyword id="KW-0408">Iron</keyword>
<keyword id="KW-0411">Iron-sulfur</keyword>
<keyword id="KW-0472">Membrane</keyword>
<keyword id="KW-0479">Metal-binding</keyword>
<keyword id="KW-1185">Reference proteome</keyword>
<keyword id="KW-0677">Repeat</keyword>
<keyword id="KW-0812">Transmembrane</keyword>
<keyword id="KW-1133">Transmembrane helix</keyword>
<keyword id="KW-0813">Transport</keyword>
<accession>Q58159</accession>
<name>Y749_METJA</name>
<organism>
    <name type="scientific">Methanocaldococcus jannaschii (strain ATCC 43067 / DSM 2661 / JAL-1 / JCM 10045 / NBRC 100440)</name>
    <name type="common">Methanococcus jannaschii</name>
    <dbReference type="NCBI Taxonomy" id="243232"/>
    <lineage>
        <taxon>Archaea</taxon>
        <taxon>Methanobacteriati</taxon>
        <taxon>Methanobacteriota</taxon>
        <taxon>Methanomada group</taxon>
        <taxon>Methanococci</taxon>
        <taxon>Methanococcales</taxon>
        <taxon>Methanocaldococcaceae</taxon>
        <taxon>Methanocaldococcus</taxon>
    </lineage>
</organism>
<sequence length="246" mass="28500">MDSRVYIIKFDNWGFMVNLMNKIQILRKISQTLFFVRALIVTGFYLSIVGFIKRFIIGDRILATIITKIIAIVLAFIAGRVFCGWMCPFGFLFNLVYELRVKLFKLKKLPTVDEKIHNKLIYFKYVVLILVVLAYLSGVKISGYTLAYLLLALFLVLGFIYPMFFCRYVCPVGSLLSIFARFSIFKLKLDENKCVGCRLCERKCPMQIKITEKIDQMECIRCFECMSVCKKGALSFSAFTKNTKKE</sequence>
<comment type="subcellular location">
    <subcellularLocation>
        <location evidence="4">Cell membrane</location>
        <topology evidence="4">Multi-pass membrane protein</topology>
    </subcellularLocation>
</comment>
<dbReference type="EMBL" id="L77117">
    <property type="protein sequence ID" value="AAB98742.1"/>
    <property type="molecule type" value="Genomic_DNA"/>
</dbReference>
<dbReference type="PIR" id="E64393">
    <property type="entry name" value="E64393"/>
</dbReference>
<dbReference type="STRING" id="243232.MJ_0749"/>
<dbReference type="PaxDb" id="243232-MJ_0749"/>
<dbReference type="EnsemblBacteria" id="AAB98742">
    <property type="protein sequence ID" value="AAB98742"/>
    <property type="gene ID" value="MJ_0749"/>
</dbReference>
<dbReference type="KEGG" id="mja:MJ_0749"/>
<dbReference type="eggNOG" id="arCOG02772">
    <property type="taxonomic scope" value="Archaea"/>
</dbReference>
<dbReference type="HOGENOM" id="CLU_033147_1_0_2"/>
<dbReference type="InParanoid" id="Q58159"/>
<dbReference type="PhylomeDB" id="Q58159"/>
<dbReference type="Proteomes" id="UP000000805">
    <property type="component" value="Chromosome"/>
</dbReference>
<dbReference type="GO" id="GO:0005886">
    <property type="term" value="C:plasma membrane"/>
    <property type="evidence" value="ECO:0000318"/>
    <property type="project" value="GO_Central"/>
</dbReference>
<dbReference type="GO" id="GO:0051539">
    <property type="term" value="F:4 iron, 4 sulfur cluster binding"/>
    <property type="evidence" value="ECO:0007669"/>
    <property type="project" value="UniProtKB-KW"/>
</dbReference>
<dbReference type="GO" id="GO:0046872">
    <property type="term" value="F:metal ion binding"/>
    <property type="evidence" value="ECO:0007669"/>
    <property type="project" value="UniProtKB-KW"/>
</dbReference>
<dbReference type="GO" id="GO:0016491">
    <property type="term" value="F:oxidoreductase activity"/>
    <property type="evidence" value="ECO:0007669"/>
    <property type="project" value="UniProtKB-ARBA"/>
</dbReference>
<dbReference type="FunFam" id="3.30.70.20:FF:000046">
    <property type="entry name" value="Periplasmic [Fe] hydrogenase large subunit"/>
    <property type="match status" value="1"/>
</dbReference>
<dbReference type="Gene3D" id="3.30.70.20">
    <property type="match status" value="1"/>
</dbReference>
<dbReference type="InterPro" id="IPR017896">
    <property type="entry name" value="4Fe4S_Fe-S-bd"/>
</dbReference>
<dbReference type="InterPro" id="IPR017900">
    <property type="entry name" value="4Fe4S_Fe_S_CS"/>
</dbReference>
<dbReference type="InterPro" id="IPR051684">
    <property type="entry name" value="Electron_Trans/Redox"/>
</dbReference>
<dbReference type="PANTHER" id="PTHR30176">
    <property type="entry name" value="FERREDOXIN-TYPE PROTEIN NAPH"/>
    <property type="match status" value="1"/>
</dbReference>
<dbReference type="PANTHER" id="PTHR30176:SF3">
    <property type="entry name" value="FERREDOXIN-TYPE PROTEIN NAPH"/>
    <property type="match status" value="1"/>
</dbReference>
<dbReference type="Pfam" id="PF13237">
    <property type="entry name" value="Fer4_10"/>
    <property type="match status" value="1"/>
</dbReference>
<dbReference type="Pfam" id="PF12801">
    <property type="entry name" value="Fer4_5"/>
    <property type="match status" value="1"/>
</dbReference>
<dbReference type="SUPFAM" id="SSF54862">
    <property type="entry name" value="4Fe-4S ferredoxins"/>
    <property type="match status" value="1"/>
</dbReference>
<dbReference type="PROSITE" id="PS00198">
    <property type="entry name" value="4FE4S_FER_1"/>
    <property type="match status" value="1"/>
</dbReference>
<dbReference type="PROSITE" id="PS51379">
    <property type="entry name" value="4FE4S_FER_2"/>
    <property type="match status" value="2"/>
</dbReference>
<gene>
    <name type="ordered locus">MJ0749</name>
</gene>
<reference key="1">
    <citation type="journal article" date="1996" name="Science">
        <title>Complete genome sequence of the methanogenic archaeon, Methanococcus jannaschii.</title>
        <authorList>
            <person name="Bult C.J."/>
            <person name="White O."/>
            <person name="Olsen G.J."/>
            <person name="Zhou L."/>
            <person name="Fleischmann R.D."/>
            <person name="Sutton G.G."/>
            <person name="Blake J.A."/>
            <person name="FitzGerald L.M."/>
            <person name="Clayton R.A."/>
            <person name="Gocayne J.D."/>
            <person name="Kerlavage A.R."/>
            <person name="Dougherty B.A."/>
            <person name="Tomb J.-F."/>
            <person name="Adams M.D."/>
            <person name="Reich C.I."/>
            <person name="Overbeek R."/>
            <person name="Kirkness E.F."/>
            <person name="Weinstock K.G."/>
            <person name="Merrick J.M."/>
            <person name="Glodek A."/>
            <person name="Scott J.L."/>
            <person name="Geoghagen N.S.M."/>
            <person name="Weidman J.F."/>
            <person name="Fuhrmann J.L."/>
            <person name="Nguyen D."/>
            <person name="Utterback T.R."/>
            <person name="Kelley J.M."/>
            <person name="Peterson J.D."/>
            <person name="Sadow P.W."/>
            <person name="Hanna M.C."/>
            <person name="Cotton M.D."/>
            <person name="Roberts K.M."/>
            <person name="Hurst M.A."/>
            <person name="Kaine B.P."/>
            <person name="Borodovsky M."/>
            <person name="Klenk H.-P."/>
            <person name="Fraser C.M."/>
            <person name="Smith H.O."/>
            <person name="Woese C.R."/>
            <person name="Venter J.C."/>
        </authorList>
    </citation>
    <scope>NUCLEOTIDE SEQUENCE [LARGE SCALE GENOMIC DNA]</scope>
    <source>
        <strain>ATCC 43067 / DSM 2661 / JAL-1 / JCM 10045 / NBRC 100440</strain>
    </source>
</reference>